<organism>
    <name type="scientific">Homo sapiens</name>
    <name type="common">Human</name>
    <dbReference type="NCBI Taxonomy" id="9606"/>
    <lineage>
        <taxon>Eukaryota</taxon>
        <taxon>Metazoa</taxon>
        <taxon>Chordata</taxon>
        <taxon>Craniata</taxon>
        <taxon>Vertebrata</taxon>
        <taxon>Euteleostomi</taxon>
        <taxon>Mammalia</taxon>
        <taxon>Eutheria</taxon>
        <taxon>Euarchontoglires</taxon>
        <taxon>Primates</taxon>
        <taxon>Haplorrhini</taxon>
        <taxon>Catarrhini</taxon>
        <taxon>Hominidae</taxon>
        <taxon>Homo</taxon>
    </lineage>
</organism>
<feature type="chain" id="PRO_0000313620" description="Atos homolog protein B">
    <location>
        <begin position="1"/>
        <end position="538"/>
    </location>
</feature>
<feature type="region of interest" description="Disordered" evidence="3">
    <location>
        <begin position="1"/>
        <end position="114"/>
    </location>
</feature>
<feature type="region of interest" description="Disordered" evidence="3">
    <location>
        <begin position="133"/>
        <end position="300"/>
    </location>
</feature>
<feature type="region of interest" description="Required for macropage invasion" evidence="2">
    <location>
        <begin position="348"/>
        <end position="430"/>
    </location>
</feature>
<feature type="region of interest" description="Transactivation domain 1 (TAD1)" evidence="2">
    <location>
        <begin position="436"/>
        <end position="444"/>
    </location>
</feature>
<feature type="compositionally biased region" description="Low complexity" evidence="3">
    <location>
        <begin position="1"/>
        <end position="18"/>
    </location>
</feature>
<feature type="compositionally biased region" description="Pro residues" evidence="3">
    <location>
        <begin position="227"/>
        <end position="238"/>
    </location>
</feature>
<feature type="modified residue" description="Phosphoserine" evidence="2">
    <location>
        <position position="254"/>
    </location>
</feature>
<feature type="modified residue" description="Phosphoserine" evidence="2">
    <location>
        <position position="255"/>
    </location>
</feature>
<feature type="splice variant" id="VSP_042437" description="In isoform 3." evidence="4">
    <location>
        <begin position="1"/>
        <end position="305"/>
    </location>
</feature>
<feature type="splice variant" id="VSP_030063" description="In isoform 2." evidence="4">
    <original>NQTVVKMFLVTFDFSDMPAAHMTFLRHRLFLVPVGEEGNANPTHRLLCYLLHLRFRSSRSGRLSLHGDIRLLFSRRSLELDTGLPYELQAVTEAPHNPRYSPLP</original>
    <variation>NPFTSPTL</variation>
    <location>
        <begin position="435"/>
        <end position="538"/>
    </location>
</feature>
<feature type="sequence conflict" description="In Ref. 2; BAB13857." evidence="5" ref="2">
    <original>N</original>
    <variation>S</variation>
    <location sequence="Q7L5A3-2">
        <position position="435"/>
    </location>
</feature>
<evidence type="ECO:0000250" key="1">
    <source>
        <dbReference type="UniProtKB" id="Q7JXG9"/>
    </source>
</evidence>
<evidence type="ECO:0000250" key="2">
    <source>
        <dbReference type="UniProtKB" id="Q8BR27"/>
    </source>
</evidence>
<evidence type="ECO:0000256" key="3">
    <source>
        <dbReference type="SAM" id="MobiDB-lite"/>
    </source>
</evidence>
<evidence type="ECO:0000303" key="4">
    <source>
    </source>
</evidence>
<evidence type="ECO:0000305" key="5"/>
<evidence type="ECO:0000312" key="6">
    <source>
        <dbReference type="HGNC" id="HGNC:25666"/>
    </source>
</evidence>
<sequence length="538" mass="56690">MRHVQAEPSPSSEPEAGPSQPPVRQGALQGGLLMGYSPAGGATSPGVYQVSIFSPPAGTSEPHRALKRQAPSTEGPRELKRGPGLGAREGLPPEEPSTVGLLGPEGPGLGLGVASQHFSHRGLCVVEQRSSVTSSWTSGAWSPPCPPSNASCNTLHTRDWASPDPGGQGSLGESPGPAPPGQLHTLDTDLHSLAQIGGKSPVAGVGNGGSLWPRESPGTANGHSPEHTPPGPGPPGPCPTKRRLLPAGEAPDVSSEEEGPAPRRRRGSLGHPTAANSSDAKATPFWSHLLPGPKEPVLDPTDCGPMGRRLKGARRLKLSPLRSLRKGPGLLSPPSASPVPTPAVSRTLLGNFEESLLRGRFAPSGHIEGFTAEIGASGSYCPQHVTLPVTVTFFDVSEQNAPAPFLGIVDLNPLGRKGYSVPKVGTVQVTLFNPNQTVVKMFLVTFDFSDMPAAHMTFLRHRLFLVPVGEEGNANPTHRLLCYLLHLRFRSSRSGRLSLHGDIRLLFSRRSLELDTGLPYELQAVTEAPHNPRYSPLP</sequence>
<gene>
    <name evidence="6" type="primary">ATOSB</name>
    <name evidence="6" type="synonym">FAM214B</name>
    <name evidence="6" type="synonym">KIAA1539</name>
</gene>
<name>ATOSB_HUMAN</name>
<protein>
    <recommendedName>
        <fullName evidence="5">Atos homolog protein B</fullName>
    </recommendedName>
</protein>
<reference key="1">
    <citation type="journal article" date="2000" name="DNA Res.">
        <title>Prediction of the coding sequences of unidentified human genes. XVII. The complete sequences of 100 new cDNA clones from brain which code for large proteins in vitro.</title>
        <authorList>
            <person name="Nagase T."/>
            <person name="Kikuno R."/>
            <person name="Ishikawa K."/>
            <person name="Hirosawa M."/>
            <person name="Ohara O."/>
        </authorList>
    </citation>
    <scope>NUCLEOTIDE SEQUENCE [LARGE SCALE MRNA] (ISOFORM 1)</scope>
    <source>
        <tissue>Brain</tissue>
    </source>
</reference>
<reference key="2">
    <citation type="journal article" date="2004" name="Nat. Genet.">
        <title>Complete sequencing and characterization of 21,243 full-length human cDNAs.</title>
        <authorList>
            <person name="Ota T."/>
            <person name="Suzuki Y."/>
            <person name="Nishikawa T."/>
            <person name="Otsuki T."/>
            <person name="Sugiyama T."/>
            <person name="Irie R."/>
            <person name="Wakamatsu A."/>
            <person name="Hayashi K."/>
            <person name="Sato H."/>
            <person name="Nagai K."/>
            <person name="Kimura K."/>
            <person name="Makita H."/>
            <person name="Sekine M."/>
            <person name="Obayashi M."/>
            <person name="Nishi T."/>
            <person name="Shibahara T."/>
            <person name="Tanaka T."/>
            <person name="Ishii S."/>
            <person name="Yamamoto J."/>
            <person name="Saito K."/>
            <person name="Kawai Y."/>
            <person name="Isono Y."/>
            <person name="Nakamura Y."/>
            <person name="Nagahari K."/>
            <person name="Murakami K."/>
            <person name="Yasuda T."/>
            <person name="Iwayanagi T."/>
            <person name="Wagatsuma M."/>
            <person name="Shiratori A."/>
            <person name="Sudo H."/>
            <person name="Hosoiri T."/>
            <person name="Kaku Y."/>
            <person name="Kodaira H."/>
            <person name="Kondo H."/>
            <person name="Sugawara M."/>
            <person name="Takahashi M."/>
            <person name="Kanda K."/>
            <person name="Yokoi T."/>
            <person name="Furuya T."/>
            <person name="Kikkawa E."/>
            <person name="Omura Y."/>
            <person name="Abe K."/>
            <person name="Kamihara K."/>
            <person name="Katsuta N."/>
            <person name="Sato K."/>
            <person name="Tanikawa M."/>
            <person name="Yamazaki M."/>
            <person name="Ninomiya K."/>
            <person name="Ishibashi T."/>
            <person name="Yamashita H."/>
            <person name="Murakawa K."/>
            <person name="Fujimori K."/>
            <person name="Tanai H."/>
            <person name="Kimata M."/>
            <person name="Watanabe M."/>
            <person name="Hiraoka S."/>
            <person name="Chiba Y."/>
            <person name="Ishida S."/>
            <person name="Ono Y."/>
            <person name="Takiguchi S."/>
            <person name="Watanabe S."/>
            <person name="Yosida M."/>
            <person name="Hotuta T."/>
            <person name="Kusano J."/>
            <person name="Kanehori K."/>
            <person name="Takahashi-Fujii A."/>
            <person name="Hara H."/>
            <person name="Tanase T.-O."/>
            <person name="Nomura Y."/>
            <person name="Togiya S."/>
            <person name="Komai F."/>
            <person name="Hara R."/>
            <person name="Takeuchi K."/>
            <person name="Arita M."/>
            <person name="Imose N."/>
            <person name="Musashino K."/>
            <person name="Yuuki H."/>
            <person name="Oshima A."/>
            <person name="Sasaki N."/>
            <person name="Aotsuka S."/>
            <person name="Yoshikawa Y."/>
            <person name="Matsunawa H."/>
            <person name="Ichihara T."/>
            <person name="Shiohata N."/>
            <person name="Sano S."/>
            <person name="Moriya S."/>
            <person name="Momiyama H."/>
            <person name="Satoh N."/>
            <person name="Takami S."/>
            <person name="Terashima Y."/>
            <person name="Suzuki O."/>
            <person name="Nakagawa S."/>
            <person name="Senoh A."/>
            <person name="Mizoguchi H."/>
            <person name="Goto Y."/>
            <person name="Shimizu F."/>
            <person name="Wakebe H."/>
            <person name="Hishigaki H."/>
            <person name="Watanabe T."/>
            <person name="Sugiyama A."/>
            <person name="Takemoto M."/>
            <person name="Kawakami B."/>
            <person name="Yamazaki M."/>
            <person name="Watanabe K."/>
            <person name="Kumagai A."/>
            <person name="Itakura S."/>
            <person name="Fukuzumi Y."/>
            <person name="Fujimori Y."/>
            <person name="Komiyama M."/>
            <person name="Tashiro H."/>
            <person name="Tanigami A."/>
            <person name="Fujiwara T."/>
            <person name="Ono T."/>
            <person name="Yamada K."/>
            <person name="Fujii Y."/>
            <person name="Ozaki K."/>
            <person name="Hirao M."/>
            <person name="Ohmori Y."/>
            <person name="Kawabata A."/>
            <person name="Hikiji T."/>
            <person name="Kobatake N."/>
            <person name="Inagaki H."/>
            <person name="Ikema Y."/>
            <person name="Okamoto S."/>
            <person name="Okitani R."/>
            <person name="Kawakami T."/>
            <person name="Noguchi S."/>
            <person name="Itoh T."/>
            <person name="Shigeta K."/>
            <person name="Senba T."/>
            <person name="Matsumura K."/>
            <person name="Nakajima Y."/>
            <person name="Mizuno T."/>
            <person name="Morinaga M."/>
            <person name="Sasaki M."/>
            <person name="Togashi T."/>
            <person name="Oyama M."/>
            <person name="Hata H."/>
            <person name="Watanabe M."/>
            <person name="Komatsu T."/>
            <person name="Mizushima-Sugano J."/>
            <person name="Satoh T."/>
            <person name="Shirai Y."/>
            <person name="Takahashi Y."/>
            <person name="Nakagawa K."/>
            <person name="Okumura K."/>
            <person name="Nagase T."/>
            <person name="Nomura N."/>
            <person name="Kikuchi H."/>
            <person name="Masuho Y."/>
            <person name="Yamashita R."/>
            <person name="Nakai K."/>
            <person name="Yada T."/>
            <person name="Nakamura Y."/>
            <person name="Ohara O."/>
            <person name="Isogai T."/>
            <person name="Sugano S."/>
        </authorList>
    </citation>
    <scope>NUCLEOTIDE SEQUENCE [LARGE SCALE MRNA] (ISOFORMS 2 AND 3)</scope>
    <source>
        <tissue>Embryo</tissue>
        <tissue>Teratocarcinoma</tissue>
    </source>
</reference>
<reference key="3">
    <citation type="journal article" date="2007" name="BMC Genomics">
        <title>The full-ORF clone resource of the German cDNA consortium.</title>
        <authorList>
            <person name="Bechtel S."/>
            <person name="Rosenfelder H."/>
            <person name="Duda A."/>
            <person name="Schmidt C.P."/>
            <person name="Ernst U."/>
            <person name="Wellenreuther R."/>
            <person name="Mehrle A."/>
            <person name="Schuster C."/>
            <person name="Bahr A."/>
            <person name="Bloecker H."/>
            <person name="Heubner D."/>
            <person name="Hoerlein A."/>
            <person name="Michel G."/>
            <person name="Wedler H."/>
            <person name="Koehrer K."/>
            <person name="Ottenwaelder B."/>
            <person name="Poustka A."/>
            <person name="Wiemann S."/>
            <person name="Schupp I."/>
        </authorList>
    </citation>
    <scope>NUCLEOTIDE SEQUENCE [LARGE SCALE MRNA] (ISOFORM 1)</scope>
    <source>
        <tissue>Amygdala</tissue>
    </source>
</reference>
<reference key="4">
    <citation type="journal article" date="2004" name="Nature">
        <title>DNA sequence and analysis of human chromosome 9.</title>
        <authorList>
            <person name="Humphray S.J."/>
            <person name="Oliver K."/>
            <person name="Hunt A.R."/>
            <person name="Plumb R.W."/>
            <person name="Loveland J.E."/>
            <person name="Howe K.L."/>
            <person name="Andrews T.D."/>
            <person name="Searle S."/>
            <person name="Hunt S.E."/>
            <person name="Scott C.E."/>
            <person name="Jones M.C."/>
            <person name="Ainscough R."/>
            <person name="Almeida J.P."/>
            <person name="Ambrose K.D."/>
            <person name="Ashwell R.I.S."/>
            <person name="Babbage A.K."/>
            <person name="Babbage S."/>
            <person name="Bagguley C.L."/>
            <person name="Bailey J."/>
            <person name="Banerjee R."/>
            <person name="Barker D.J."/>
            <person name="Barlow K.F."/>
            <person name="Bates K."/>
            <person name="Beasley H."/>
            <person name="Beasley O."/>
            <person name="Bird C.P."/>
            <person name="Bray-Allen S."/>
            <person name="Brown A.J."/>
            <person name="Brown J.Y."/>
            <person name="Burford D."/>
            <person name="Burrill W."/>
            <person name="Burton J."/>
            <person name="Carder C."/>
            <person name="Carter N.P."/>
            <person name="Chapman J.C."/>
            <person name="Chen Y."/>
            <person name="Clarke G."/>
            <person name="Clark S.Y."/>
            <person name="Clee C.M."/>
            <person name="Clegg S."/>
            <person name="Collier R.E."/>
            <person name="Corby N."/>
            <person name="Crosier M."/>
            <person name="Cummings A.T."/>
            <person name="Davies J."/>
            <person name="Dhami P."/>
            <person name="Dunn M."/>
            <person name="Dutta I."/>
            <person name="Dyer L.W."/>
            <person name="Earthrowl M.E."/>
            <person name="Faulkner L."/>
            <person name="Fleming C.J."/>
            <person name="Frankish A."/>
            <person name="Frankland J.A."/>
            <person name="French L."/>
            <person name="Fricker D.G."/>
            <person name="Garner P."/>
            <person name="Garnett J."/>
            <person name="Ghori J."/>
            <person name="Gilbert J.G.R."/>
            <person name="Glison C."/>
            <person name="Grafham D.V."/>
            <person name="Gribble S."/>
            <person name="Griffiths C."/>
            <person name="Griffiths-Jones S."/>
            <person name="Grocock R."/>
            <person name="Guy J."/>
            <person name="Hall R.E."/>
            <person name="Hammond S."/>
            <person name="Harley J.L."/>
            <person name="Harrison E.S.I."/>
            <person name="Hart E.A."/>
            <person name="Heath P.D."/>
            <person name="Henderson C.D."/>
            <person name="Hopkins B.L."/>
            <person name="Howard P.J."/>
            <person name="Howden P.J."/>
            <person name="Huckle E."/>
            <person name="Johnson C."/>
            <person name="Johnson D."/>
            <person name="Joy A.A."/>
            <person name="Kay M."/>
            <person name="Keenan S."/>
            <person name="Kershaw J.K."/>
            <person name="Kimberley A.M."/>
            <person name="King A."/>
            <person name="Knights A."/>
            <person name="Laird G.K."/>
            <person name="Langford C."/>
            <person name="Lawlor S."/>
            <person name="Leongamornlert D.A."/>
            <person name="Leversha M."/>
            <person name="Lloyd C."/>
            <person name="Lloyd D.M."/>
            <person name="Lovell J."/>
            <person name="Martin S."/>
            <person name="Mashreghi-Mohammadi M."/>
            <person name="Matthews L."/>
            <person name="McLaren S."/>
            <person name="McLay K.E."/>
            <person name="McMurray A."/>
            <person name="Milne S."/>
            <person name="Nickerson T."/>
            <person name="Nisbett J."/>
            <person name="Nordsiek G."/>
            <person name="Pearce A.V."/>
            <person name="Peck A.I."/>
            <person name="Porter K.M."/>
            <person name="Pandian R."/>
            <person name="Pelan S."/>
            <person name="Phillimore B."/>
            <person name="Povey S."/>
            <person name="Ramsey Y."/>
            <person name="Rand V."/>
            <person name="Scharfe M."/>
            <person name="Sehra H.K."/>
            <person name="Shownkeen R."/>
            <person name="Sims S.K."/>
            <person name="Skuce C.D."/>
            <person name="Smith M."/>
            <person name="Steward C.A."/>
            <person name="Swarbreck D."/>
            <person name="Sycamore N."/>
            <person name="Tester J."/>
            <person name="Thorpe A."/>
            <person name="Tracey A."/>
            <person name="Tromans A."/>
            <person name="Thomas D.W."/>
            <person name="Wall M."/>
            <person name="Wallis J.M."/>
            <person name="West A.P."/>
            <person name="Whitehead S.L."/>
            <person name="Willey D.L."/>
            <person name="Williams S.A."/>
            <person name="Wilming L."/>
            <person name="Wray P.W."/>
            <person name="Young L."/>
            <person name="Ashurst J.L."/>
            <person name="Coulson A."/>
            <person name="Blocker H."/>
            <person name="Durbin R.M."/>
            <person name="Sulston J.E."/>
            <person name="Hubbard T."/>
            <person name="Jackson M.J."/>
            <person name="Bentley D.R."/>
            <person name="Beck S."/>
            <person name="Rogers J."/>
            <person name="Dunham I."/>
        </authorList>
    </citation>
    <scope>NUCLEOTIDE SEQUENCE [LARGE SCALE GENOMIC DNA]</scope>
</reference>
<reference key="5">
    <citation type="submission" date="2005-09" db="EMBL/GenBank/DDBJ databases">
        <authorList>
            <person name="Mural R.J."/>
            <person name="Istrail S."/>
            <person name="Sutton G.G."/>
            <person name="Florea L."/>
            <person name="Halpern A.L."/>
            <person name="Mobarry C.M."/>
            <person name="Lippert R."/>
            <person name="Walenz B."/>
            <person name="Shatkay H."/>
            <person name="Dew I."/>
            <person name="Miller J.R."/>
            <person name="Flanigan M.J."/>
            <person name="Edwards N.J."/>
            <person name="Bolanos R."/>
            <person name="Fasulo D."/>
            <person name="Halldorsson B.V."/>
            <person name="Hannenhalli S."/>
            <person name="Turner R."/>
            <person name="Yooseph S."/>
            <person name="Lu F."/>
            <person name="Nusskern D.R."/>
            <person name="Shue B.C."/>
            <person name="Zheng X.H."/>
            <person name="Zhong F."/>
            <person name="Delcher A.L."/>
            <person name="Huson D.H."/>
            <person name="Kravitz S.A."/>
            <person name="Mouchard L."/>
            <person name="Reinert K."/>
            <person name="Remington K.A."/>
            <person name="Clark A.G."/>
            <person name="Waterman M.S."/>
            <person name="Eichler E.E."/>
            <person name="Adams M.D."/>
            <person name="Hunkapiller M.W."/>
            <person name="Myers E.W."/>
            <person name="Venter J.C."/>
        </authorList>
    </citation>
    <scope>NUCLEOTIDE SEQUENCE [LARGE SCALE GENOMIC DNA]</scope>
</reference>
<reference key="6">
    <citation type="journal article" date="2004" name="Genome Res.">
        <title>The status, quality, and expansion of the NIH full-length cDNA project: the Mammalian Gene Collection (MGC).</title>
        <authorList>
            <consortium name="The MGC Project Team"/>
        </authorList>
    </citation>
    <scope>NUCLEOTIDE SEQUENCE [LARGE SCALE MRNA] (ISOFORM 1)</scope>
    <source>
        <tissue>Placenta</tissue>
    </source>
</reference>
<reference key="7">
    <citation type="submission" date="1998-03" db="EMBL/GenBank/DDBJ databases">
        <title>Sequence analysis of a human P1 clone containing the XRCC9 DNA repair gene.</title>
        <authorList>
            <person name="Lamerdin J.E."/>
            <person name="McCready P.M."/>
            <person name="Skowronski E."/>
            <person name="Adamson A.W."/>
            <person name="Burkhart-Schultz K."/>
            <person name="Gordon L."/>
            <person name="Kyle A."/>
            <person name="Ramirez M."/>
            <person name="Stilwagen S."/>
            <person name="Phan H."/>
            <person name="Velasco N."/>
            <person name="Garnes J."/>
            <person name="Danganan L."/>
            <person name="Poundstone P."/>
            <person name="Christensen M."/>
            <person name="Georgescu A."/>
            <person name="Avila J."/>
            <person name="Liu S."/>
            <person name="Attix C."/>
            <person name="Andreise T."/>
            <person name="Trankheim M."/>
            <person name="Amico-Keller G."/>
            <person name="Coefield J."/>
            <person name="Duarte S."/>
            <person name="Lucas S."/>
            <person name="Bruce R."/>
            <person name="Thomas P."/>
            <person name="Quan G."/>
            <person name="Kronmiller B."/>
            <person name="Arellano A."/>
            <person name="Montgomery M."/>
            <person name="Ow D."/>
            <person name="Nolan M."/>
            <person name="Trong S."/>
            <person name="Kobayashi A."/>
            <person name="Olsen A.O."/>
            <person name="Carrano A.V."/>
        </authorList>
    </citation>
    <scope>NUCLEOTIDE SEQUENCE [GENOMIC DNA] OF 299-538 (ISOFORM 1)</scope>
</reference>
<keyword id="KW-0025">Alternative splicing</keyword>
<keyword id="KW-0539">Nucleus</keyword>
<keyword id="KW-0597">Phosphoprotein</keyword>
<keyword id="KW-1267">Proteomics identification</keyword>
<keyword id="KW-1185">Reference proteome</keyword>
<dbReference type="EMBL" id="AB040972">
    <property type="protein sequence ID" value="BAA96063.1"/>
    <property type="status" value="ALT_INIT"/>
    <property type="molecule type" value="mRNA"/>
</dbReference>
<dbReference type="EMBL" id="AK021622">
    <property type="protein sequence ID" value="BAB13857.1"/>
    <property type="molecule type" value="mRNA"/>
</dbReference>
<dbReference type="EMBL" id="AK022837">
    <property type="protein sequence ID" value="BAG51123.1"/>
    <property type="molecule type" value="mRNA"/>
</dbReference>
<dbReference type="EMBL" id="AL583909">
    <property type="protein sequence ID" value="CAC29493.1"/>
    <property type="molecule type" value="mRNA"/>
</dbReference>
<dbReference type="EMBL" id="AC004472">
    <property type="protein sequence ID" value="AAC07982.1"/>
    <property type="status" value="ALT_SEQ"/>
    <property type="molecule type" value="Genomic_DNA"/>
</dbReference>
<dbReference type="EMBL" id="AL353795">
    <property type="status" value="NOT_ANNOTATED_CDS"/>
    <property type="molecule type" value="Genomic_DNA"/>
</dbReference>
<dbReference type="EMBL" id="CH471071">
    <property type="protein sequence ID" value="EAW58387.1"/>
    <property type="molecule type" value="Genomic_DNA"/>
</dbReference>
<dbReference type="EMBL" id="CH471071">
    <property type="protein sequence ID" value="EAW58388.1"/>
    <property type="molecule type" value="Genomic_DNA"/>
</dbReference>
<dbReference type="EMBL" id="CH471071">
    <property type="protein sequence ID" value="EAW58389.1"/>
    <property type="molecule type" value="Genomic_DNA"/>
</dbReference>
<dbReference type="EMBL" id="CH471071">
    <property type="protein sequence ID" value="EAW58391.1"/>
    <property type="molecule type" value="Genomic_DNA"/>
</dbReference>
<dbReference type="EMBL" id="CH471071">
    <property type="protein sequence ID" value="EAW58392.1"/>
    <property type="molecule type" value="Genomic_DNA"/>
</dbReference>
<dbReference type="EMBL" id="BC004406">
    <property type="protein sequence ID" value="AAH04406.1"/>
    <property type="molecule type" value="mRNA"/>
</dbReference>
<dbReference type="CCDS" id="CCDS6578.1">
    <molecule id="Q7L5A3-1"/>
</dbReference>
<dbReference type="PIR" id="T02247">
    <property type="entry name" value="T02247"/>
</dbReference>
<dbReference type="RefSeq" id="NP_001304920.1">
    <molecule id="Q7L5A3-1"/>
    <property type="nucleotide sequence ID" value="NM_001317991.2"/>
</dbReference>
<dbReference type="RefSeq" id="NP_079458.2">
    <molecule id="Q7L5A3-1"/>
    <property type="nucleotide sequence ID" value="NM_025182.3"/>
</dbReference>
<dbReference type="RefSeq" id="XP_005251645.1">
    <molecule id="Q7L5A3-1"/>
    <property type="nucleotide sequence ID" value="XM_005251588.2"/>
</dbReference>
<dbReference type="RefSeq" id="XP_005251647.1">
    <molecule id="Q7L5A3-1"/>
    <property type="nucleotide sequence ID" value="XM_005251590.2"/>
</dbReference>
<dbReference type="RefSeq" id="XP_005251648.1">
    <molecule id="Q7L5A3-1"/>
    <property type="nucleotide sequence ID" value="XM_005251591.2"/>
</dbReference>
<dbReference type="RefSeq" id="XP_011516339.1">
    <molecule id="Q7L5A3-1"/>
    <property type="nucleotide sequence ID" value="XM_011518037.2"/>
</dbReference>
<dbReference type="RefSeq" id="XP_011516345.1">
    <property type="nucleotide sequence ID" value="XM_011518043.1"/>
</dbReference>
<dbReference type="RefSeq" id="XP_011516346.1">
    <property type="nucleotide sequence ID" value="XM_011518044.1"/>
</dbReference>
<dbReference type="RefSeq" id="XP_016870659.1">
    <property type="nucleotide sequence ID" value="XM_017015170.1"/>
</dbReference>
<dbReference type="RefSeq" id="XP_024303457.1">
    <molecule id="Q7L5A3-1"/>
    <property type="nucleotide sequence ID" value="XM_024447689.2"/>
</dbReference>
<dbReference type="RefSeq" id="XP_047279863.1">
    <molecule id="Q7L5A3-1"/>
    <property type="nucleotide sequence ID" value="XM_047423907.1"/>
</dbReference>
<dbReference type="RefSeq" id="XP_047279864.1">
    <molecule id="Q7L5A3-1"/>
    <property type="nucleotide sequence ID" value="XM_047423908.1"/>
</dbReference>
<dbReference type="RefSeq" id="XP_047279865.1">
    <molecule id="Q7L5A3-1"/>
    <property type="nucleotide sequence ID" value="XM_047423909.1"/>
</dbReference>
<dbReference type="RefSeq" id="XP_054219857.1">
    <molecule id="Q7L5A3-1"/>
    <property type="nucleotide sequence ID" value="XM_054363882.1"/>
</dbReference>
<dbReference type="RefSeq" id="XP_054219858.1">
    <molecule id="Q7L5A3-1"/>
    <property type="nucleotide sequence ID" value="XM_054363883.1"/>
</dbReference>
<dbReference type="RefSeq" id="XP_054219859.1">
    <molecule id="Q7L5A3-1"/>
    <property type="nucleotide sequence ID" value="XM_054363884.1"/>
</dbReference>
<dbReference type="RefSeq" id="XP_054219860.1">
    <molecule id="Q7L5A3-1"/>
    <property type="nucleotide sequence ID" value="XM_054363885.1"/>
</dbReference>
<dbReference type="RefSeq" id="XP_054219861.1">
    <molecule id="Q7L5A3-1"/>
    <property type="nucleotide sequence ID" value="XM_054363886.1"/>
</dbReference>
<dbReference type="RefSeq" id="XP_054219862.1">
    <molecule id="Q7L5A3-1"/>
    <property type="nucleotide sequence ID" value="XM_054363887.1"/>
</dbReference>
<dbReference type="RefSeq" id="XP_054219863.1">
    <molecule id="Q7L5A3-1"/>
    <property type="nucleotide sequence ID" value="XM_054363888.1"/>
</dbReference>
<dbReference type="RefSeq" id="XP_054219864.1">
    <molecule id="Q7L5A3-1"/>
    <property type="nucleotide sequence ID" value="XM_054363889.1"/>
</dbReference>
<dbReference type="BioGRID" id="123202">
    <property type="interactions" value="68"/>
</dbReference>
<dbReference type="FunCoup" id="Q7L5A3">
    <property type="interactions" value="987"/>
</dbReference>
<dbReference type="IntAct" id="Q7L5A3">
    <property type="interactions" value="63"/>
</dbReference>
<dbReference type="MINT" id="Q7L5A3"/>
<dbReference type="STRING" id="9606.ENSP00000367823"/>
<dbReference type="GlyGen" id="Q7L5A3">
    <property type="glycosylation" value="1 site"/>
</dbReference>
<dbReference type="iPTMnet" id="Q7L5A3"/>
<dbReference type="PhosphoSitePlus" id="Q7L5A3"/>
<dbReference type="BioMuta" id="FAM214B"/>
<dbReference type="DMDM" id="74749892"/>
<dbReference type="jPOST" id="Q7L5A3"/>
<dbReference type="MassIVE" id="Q7L5A3"/>
<dbReference type="PaxDb" id="9606-ENSP00000367823"/>
<dbReference type="PeptideAtlas" id="Q7L5A3"/>
<dbReference type="ProteomicsDB" id="68803">
    <molecule id="Q7L5A3-1"/>
</dbReference>
<dbReference type="ProteomicsDB" id="68804">
    <molecule id="Q7L5A3-2"/>
</dbReference>
<dbReference type="Antibodypedia" id="56170">
    <property type="antibodies" value="20 antibodies from 8 providers"/>
</dbReference>
<dbReference type="DNASU" id="80256"/>
<dbReference type="Ensembl" id="ENST00000322813.10">
    <molecule id="Q7L5A3-1"/>
    <property type="protein sequence ID" value="ENSP00000319897.5"/>
    <property type="gene ID" value="ENSG00000005238.20"/>
</dbReference>
<dbReference type="Ensembl" id="ENST00000378557.1">
    <molecule id="Q7L5A3-1"/>
    <property type="protein sequence ID" value="ENSP00000367819.1"/>
    <property type="gene ID" value="ENSG00000005238.20"/>
</dbReference>
<dbReference type="Ensembl" id="ENST00000378561.5">
    <molecule id="Q7L5A3-1"/>
    <property type="protein sequence ID" value="ENSP00000367823.1"/>
    <property type="gene ID" value="ENSG00000005238.20"/>
</dbReference>
<dbReference type="Ensembl" id="ENST00000378566.5">
    <molecule id="Q7L5A3-3"/>
    <property type="protein sequence ID" value="ENSP00000367829.1"/>
    <property type="gene ID" value="ENSG00000005238.20"/>
</dbReference>
<dbReference type="Ensembl" id="ENST00000488109.6">
    <molecule id="Q7L5A3-1"/>
    <property type="protein sequence ID" value="ENSP00000475120.1"/>
    <property type="gene ID" value="ENSG00000005238.20"/>
</dbReference>
<dbReference type="Ensembl" id="ENST00000603301.5">
    <molecule id="Q7L5A3-1"/>
    <property type="protein sequence ID" value="ENSP00000474335.1"/>
    <property type="gene ID" value="ENSG00000005238.20"/>
</dbReference>
<dbReference type="Ensembl" id="ENST00000605244.5">
    <molecule id="Q7L5A3-1"/>
    <property type="protein sequence ID" value="ENSP00000474833.1"/>
    <property type="gene ID" value="ENSG00000005238.20"/>
</dbReference>
<dbReference type="GeneID" id="80256"/>
<dbReference type="KEGG" id="hsa:80256"/>
<dbReference type="MANE-Select" id="ENST00000322813.10">
    <property type="protein sequence ID" value="ENSP00000319897.5"/>
    <property type="RefSeq nucleotide sequence ID" value="NM_025182.4"/>
    <property type="RefSeq protein sequence ID" value="NP_079458.2"/>
</dbReference>
<dbReference type="UCSC" id="uc003zwl.4">
    <molecule id="Q7L5A3-1"/>
    <property type="organism name" value="human"/>
</dbReference>
<dbReference type="AGR" id="HGNC:25666"/>
<dbReference type="CTD" id="80256"/>
<dbReference type="DisGeNET" id="80256"/>
<dbReference type="GeneCards" id="ATOSB"/>
<dbReference type="HGNC" id="HGNC:25666">
    <property type="gene designation" value="ATOSB"/>
</dbReference>
<dbReference type="HPA" id="ENSG00000005238">
    <property type="expression patterns" value="Low tissue specificity"/>
</dbReference>
<dbReference type="MIM" id="620169">
    <property type="type" value="gene"/>
</dbReference>
<dbReference type="neXtProt" id="NX_Q7L5A3"/>
<dbReference type="OpenTargets" id="ENSG00000005238"/>
<dbReference type="PharmGKB" id="PA134880815"/>
<dbReference type="VEuPathDB" id="HostDB:ENSG00000005238"/>
<dbReference type="eggNOG" id="KOG2306">
    <property type="taxonomic scope" value="Eukaryota"/>
</dbReference>
<dbReference type="GeneTree" id="ENSGT00940000159834"/>
<dbReference type="HOGENOM" id="CLU_080879_0_0_1"/>
<dbReference type="InParanoid" id="Q7L5A3"/>
<dbReference type="OMA" id="CVVEQRG"/>
<dbReference type="OrthoDB" id="8625101at2759"/>
<dbReference type="PAN-GO" id="Q7L5A3">
    <property type="GO annotations" value="0 GO annotations based on evolutionary models"/>
</dbReference>
<dbReference type="PhylomeDB" id="Q7L5A3"/>
<dbReference type="TreeFam" id="TF325496"/>
<dbReference type="PathwayCommons" id="Q7L5A3"/>
<dbReference type="SignaLink" id="Q7L5A3"/>
<dbReference type="BioGRID-ORCS" id="80256">
    <property type="hits" value="14 hits in 1160 CRISPR screens"/>
</dbReference>
<dbReference type="ChiTaRS" id="FAM214B">
    <property type="organism name" value="human"/>
</dbReference>
<dbReference type="GeneWiki" id="KIAA1539"/>
<dbReference type="GenomeRNAi" id="80256"/>
<dbReference type="Pharos" id="Q7L5A3">
    <property type="development level" value="Tdark"/>
</dbReference>
<dbReference type="PRO" id="PR:Q7L5A3"/>
<dbReference type="Proteomes" id="UP000005640">
    <property type="component" value="Chromosome 9"/>
</dbReference>
<dbReference type="RNAct" id="Q7L5A3">
    <property type="molecule type" value="protein"/>
</dbReference>
<dbReference type="Bgee" id="ENSG00000005238">
    <property type="expression patterns" value="Expressed in granulocyte and 205 other cell types or tissues"/>
</dbReference>
<dbReference type="GO" id="GO:0005634">
    <property type="term" value="C:nucleus"/>
    <property type="evidence" value="ECO:0000314"/>
    <property type="project" value="LIFEdb"/>
</dbReference>
<dbReference type="InterPro" id="IPR033473">
    <property type="entry name" value="Atos-like_C"/>
</dbReference>
<dbReference type="InterPro" id="IPR025261">
    <property type="entry name" value="Atos-like_cons_dom"/>
</dbReference>
<dbReference type="InterPro" id="IPR051506">
    <property type="entry name" value="ATOS_Transcription_Regulators"/>
</dbReference>
<dbReference type="PANTHER" id="PTHR13199:SF12">
    <property type="entry name" value="ATOS HOMOLOG PROTEIN B"/>
    <property type="match status" value="1"/>
</dbReference>
<dbReference type="PANTHER" id="PTHR13199">
    <property type="entry name" value="GH03947P"/>
    <property type="match status" value="1"/>
</dbReference>
<dbReference type="Pfam" id="PF13889">
    <property type="entry name" value="Chromosome_seg"/>
    <property type="match status" value="1"/>
</dbReference>
<dbReference type="Pfam" id="PF13915">
    <property type="entry name" value="DUF4210"/>
    <property type="match status" value="1"/>
</dbReference>
<dbReference type="SMART" id="SM01177">
    <property type="entry name" value="DUF4210"/>
    <property type="match status" value="1"/>
</dbReference>
<proteinExistence type="evidence at protein level"/>
<comment type="function">
    <text evidence="2">Transcription regulator that may syncronize transcriptional and translational programs.</text>
</comment>
<comment type="interaction">
    <interactant intactId="EBI-745689">
        <id>Q7L5A3</id>
    </interactant>
    <interactant intactId="EBI-11096309">
        <id>Q9NYB9-2</id>
        <label>ABI2</label>
    </interactant>
    <organismsDiffer>false</organismsDiffer>
    <experiments>3</experiments>
</comment>
<comment type="interaction">
    <interactant intactId="EBI-745689">
        <id>Q7L5A3</id>
    </interactant>
    <interactant intactId="EBI-357530">
        <id>Q9ULX6</id>
        <label>AKAP8L</label>
    </interactant>
    <organismsDiffer>false</organismsDiffer>
    <experiments>3</experiments>
</comment>
<comment type="interaction">
    <interactant intactId="EBI-745689">
        <id>Q7L5A3</id>
    </interactant>
    <interactant intactId="EBI-2949658">
        <id>O95429</id>
        <label>BAG4</label>
    </interactant>
    <organismsDiffer>false</organismsDiffer>
    <experiments>5</experiments>
</comment>
<comment type="interaction">
    <interactant intactId="EBI-745689">
        <id>Q7L5A3</id>
    </interactant>
    <interactant intactId="EBI-739580">
        <id>Q13137</id>
        <label>CALCOCO2</label>
    </interactant>
    <organismsDiffer>false</organismsDiffer>
    <experiments>3</experiments>
</comment>
<comment type="interaction">
    <interactant intactId="EBI-745689">
        <id>Q7L5A3</id>
    </interactant>
    <interactant intactId="EBI-11977221">
        <id>Q86Z20</id>
        <label>CCDC125</label>
    </interactant>
    <organismsDiffer>false</organismsDiffer>
    <experiments>3</experiments>
</comment>
<comment type="interaction">
    <interactant intactId="EBI-745689">
        <id>Q7L5A3</id>
    </interactant>
    <interactant intactId="EBI-739624">
        <id>Q8NHQ1</id>
        <label>CEP70</label>
    </interactant>
    <organismsDiffer>false</organismsDiffer>
    <experiments>5</experiments>
</comment>
<comment type="interaction">
    <interactant intactId="EBI-745689">
        <id>Q7L5A3</id>
    </interactant>
    <interactant intactId="EBI-3867333">
        <id>A8MQ03</id>
        <label>CYSRT1</label>
    </interactant>
    <organismsDiffer>false</organismsDiffer>
    <experiments>3</experiments>
</comment>
<comment type="interaction">
    <interactant intactId="EBI-745689">
        <id>Q7L5A3</id>
    </interactant>
    <interactant intactId="EBI-2564275">
        <id>Q14689</id>
        <label>DIP2A</label>
    </interactant>
    <organismsDiffer>false</organismsDiffer>
    <experiments>3</experiments>
</comment>
<comment type="interaction">
    <interactant intactId="EBI-745689">
        <id>Q7L5A3</id>
    </interactant>
    <interactant intactId="EBI-3952284">
        <id>Q96EY1-2</id>
        <label>DNAJA3</label>
    </interactant>
    <organismsDiffer>false</organismsDiffer>
    <experiments>3</experiments>
</comment>
<comment type="interaction">
    <interactant intactId="EBI-745689">
        <id>Q7L5A3</id>
    </interactant>
    <interactant intactId="EBI-2349927">
        <id>Q5JST6</id>
        <label>EFHC2</label>
    </interactant>
    <organismsDiffer>false</organismsDiffer>
    <experiments>3</experiments>
</comment>
<comment type="interaction">
    <interactant intactId="EBI-745689">
        <id>Q7L5A3</id>
    </interactant>
    <interactant intactId="EBI-12807776">
        <id>O00167-2</id>
        <label>EYA2</label>
    </interactant>
    <organismsDiffer>false</organismsDiffer>
    <experiments>3</experiments>
</comment>
<comment type="interaction">
    <interactant intactId="EBI-745689">
        <id>Q7L5A3</id>
    </interactant>
    <interactant intactId="EBI-701903">
        <id>Q14192</id>
        <label>FHL2</label>
    </interactant>
    <organismsDiffer>false</organismsDiffer>
    <experiments>3</experiments>
</comment>
<comment type="interaction">
    <interactant intactId="EBI-745689">
        <id>Q7L5A3</id>
    </interactant>
    <interactant intactId="EBI-750641">
        <id>Q5TD97</id>
        <label>FHL5</label>
    </interactant>
    <organismsDiffer>false</organismsDiffer>
    <experiments>5</experiments>
</comment>
<comment type="interaction">
    <interactant intactId="EBI-745689">
        <id>Q7L5A3</id>
    </interactant>
    <interactant intactId="EBI-618309">
        <id>Q08379</id>
        <label>GOLGA2</label>
    </interactant>
    <organismsDiffer>false</organismsDiffer>
    <experiments>3</experiments>
</comment>
<comment type="interaction">
    <interactant intactId="EBI-745689">
        <id>Q7L5A3</id>
    </interactant>
    <interactant intactId="EBI-11519926">
        <id>Q6PI77</id>
        <label>GPRASP3</label>
    </interactant>
    <organismsDiffer>false</organismsDiffer>
    <experiments>3</experiments>
</comment>
<comment type="interaction">
    <interactant intactId="EBI-745689">
        <id>Q7L5A3</id>
    </interactant>
    <interactant intactId="EBI-7116203">
        <id>O75031</id>
        <label>HSF2BP</label>
    </interactant>
    <organismsDiffer>false</organismsDiffer>
    <experiments>3</experiments>
</comment>
<comment type="interaction">
    <interactant intactId="EBI-745689">
        <id>Q7L5A3</id>
    </interactant>
    <interactant intactId="EBI-739074">
        <id>Q9UJY1</id>
        <label>HSPB8</label>
    </interactant>
    <organismsDiffer>false</organismsDiffer>
    <experiments>3</experiments>
</comment>
<comment type="interaction">
    <interactant intactId="EBI-745689">
        <id>Q7L5A3</id>
    </interactant>
    <interactant intactId="EBI-745305">
        <id>Q13422</id>
        <label>IKZF1</label>
    </interactant>
    <organismsDiffer>false</organismsDiffer>
    <experiments>6</experiments>
</comment>
<comment type="interaction">
    <interactant intactId="EBI-745689">
        <id>Q7L5A3</id>
    </interactant>
    <interactant intactId="EBI-11522367">
        <id>Q13422-7</id>
        <label>IKZF1</label>
    </interactant>
    <organismsDiffer>false</organismsDiffer>
    <experiments>3</experiments>
</comment>
<comment type="interaction">
    <interactant intactId="EBI-745689">
        <id>Q7L5A3</id>
    </interactant>
    <interactant intactId="EBI-2551319">
        <id>O95235</id>
        <label>KIF20A</label>
    </interactant>
    <organismsDiffer>false</organismsDiffer>
    <experiments>4</experiments>
</comment>
<comment type="interaction">
    <interactant intactId="EBI-745689">
        <id>Q7L5A3</id>
    </interactant>
    <interactant intactId="EBI-358297">
        <id>O00505</id>
        <label>KPNA3</label>
    </interactant>
    <organismsDiffer>false</organismsDiffer>
    <experiments>3</experiments>
</comment>
<comment type="interaction">
    <interactant intactId="EBI-745689">
        <id>Q7L5A3</id>
    </interactant>
    <interactant intactId="EBI-540602">
        <id>O15131</id>
        <label>KPNA5</label>
    </interactant>
    <organismsDiffer>false</organismsDiffer>
    <experiments>3</experiments>
</comment>
<comment type="interaction">
    <interactant intactId="EBI-745689">
        <id>Q7L5A3</id>
    </interactant>
    <interactant intactId="EBI-1047093">
        <id>O76011</id>
        <label>KRT34</label>
    </interactant>
    <organismsDiffer>false</organismsDiffer>
    <experiments>3</experiments>
</comment>
<comment type="interaction">
    <interactant intactId="EBI-745689">
        <id>Q7L5A3</id>
    </interactant>
    <interactant intactId="EBI-1048945">
        <id>Q3LI72</id>
        <label>KRTAP19-5</label>
    </interactant>
    <organismsDiffer>false</organismsDiffer>
    <experiments>3</experiments>
</comment>
<comment type="interaction">
    <interactant intactId="EBI-745689">
        <id>Q7L5A3</id>
    </interactant>
    <interactant intactId="EBI-12805508">
        <id>Q3LI70</id>
        <label>KRTAP19-6</label>
    </interactant>
    <organismsDiffer>false</organismsDiffer>
    <experiments>3</experiments>
</comment>
<comment type="interaction">
    <interactant intactId="EBI-745689">
        <id>Q7L5A3</id>
    </interactant>
    <interactant intactId="EBI-11962084">
        <id>Q3LI66</id>
        <label>KRTAP6-2</label>
    </interactant>
    <organismsDiffer>false</organismsDiffer>
    <experiments>3</experiments>
</comment>
<comment type="interaction">
    <interactant intactId="EBI-745689">
        <id>Q7L5A3</id>
    </interactant>
    <interactant intactId="EBI-22311199">
        <id>Q3LI67</id>
        <label>KRTAP6-3</label>
    </interactant>
    <organismsDiffer>false</organismsDiffer>
    <experiments>3</experiments>
</comment>
<comment type="interaction">
    <interactant intactId="EBI-745689">
        <id>Q7L5A3</id>
    </interactant>
    <interactant intactId="EBI-11959475">
        <id>P25791-3</id>
        <label>LMO2</label>
    </interactant>
    <organismsDiffer>false</organismsDiffer>
    <experiments>3</experiments>
</comment>
<comment type="interaction">
    <interactant intactId="EBI-745689">
        <id>Q7L5A3</id>
    </interactant>
    <interactant intactId="EBI-741037">
        <id>Q9BRK4</id>
        <label>LZTS2</label>
    </interactant>
    <organismsDiffer>false</organismsDiffer>
    <experiments>3</experiments>
</comment>
<comment type="interaction">
    <interactant intactId="EBI-745689">
        <id>Q7L5A3</id>
    </interactant>
    <interactant intactId="EBI-724076">
        <id>Q99750</id>
        <label>MDFI</label>
    </interactant>
    <organismsDiffer>false</organismsDiffer>
    <experiments>4</experiments>
</comment>
<comment type="interaction">
    <interactant intactId="EBI-745689">
        <id>Q7L5A3</id>
    </interactant>
    <interactant intactId="EBI-744790">
        <id>Q8NCR3</id>
        <label>MFI</label>
    </interactant>
    <organismsDiffer>false</organismsDiffer>
    <experiments>3</experiments>
</comment>
<comment type="interaction">
    <interactant intactId="EBI-745689">
        <id>Q7L5A3</id>
    </interactant>
    <interactant intactId="EBI-10172526">
        <id>Q9UJV3-2</id>
        <label>MID2</label>
    </interactant>
    <organismsDiffer>false</organismsDiffer>
    <experiments>3</experiments>
</comment>
<comment type="interaction">
    <interactant intactId="EBI-745689">
        <id>Q7L5A3</id>
    </interactant>
    <interactant intactId="EBI-2340269">
        <id>Q13064</id>
        <label>MKRN3</label>
    </interactant>
    <organismsDiffer>false</organismsDiffer>
    <experiments>3</experiments>
</comment>
<comment type="interaction">
    <interactant intactId="EBI-745689">
        <id>Q7L5A3</id>
    </interactant>
    <interactant intactId="EBI-741792">
        <id>O00160</id>
        <label>MYO1F</label>
    </interactant>
    <organismsDiffer>false</organismsDiffer>
    <experiments>3</experiments>
</comment>
<comment type="interaction">
    <interactant intactId="EBI-745689">
        <id>Q7L5A3</id>
    </interactant>
    <interactant intactId="EBI-14093244">
        <id>Q9ULV0-2</id>
        <label>MYO5B</label>
    </interactant>
    <organismsDiffer>false</organismsDiffer>
    <experiments>3</experiments>
</comment>
<comment type="interaction">
    <interactant intactId="EBI-745689">
        <id>Q7L5A3</id>
    </interactant>
    <interactant intactId="EBI-5662487">
        <id>Q8TDC0</id>
        <label>MYOZ3</label>
    </interactant>
    <organismsDiffer>false</organismsDiffer>
    <experiments>3</experiments>
</comment>
<comment type="interaction">
    <interactant intactId="EBI-745689">
        <id>Q7L5A3</id>
    </interactant>
    <interactant intactId="EBI-350517">
        <id>Q9NR12</id>
        <label>PDLIM7</label>
    </interactant>
    <organismsDiffer>false</organismsDiffer>
    <experiments>3</experiments>
</comment>
<comment type="interaction">
    <interactant intactId="EBI-745689">
        <id>Q7L5A3</id>
    </interactant>
    <interactant intactId="EBI-357275">
        <id>Q99471</id>
        <label>PFDN5</label>
    </interactant>
    <organismsDiffer>false</organismsDiffer>
    <experiments>3</experiments>
</comment>
<comment type="interaction">
    <interactant intactId="EBI-745689">
        <id>Q7L5A3</id>
    </interactant>
    <interactant intactId="EBI-79165">
        <id>Q9NRD5</id>
        <label>PICK1</label>
    </interactant>
    <organismsDiffer>false</organismsDiffer>
    <experiments>3</experiments>
</comment>
<comment type="interaction">
    <interactant intactId="EBI-745689">
        <id>Q7L5A3</id>
    </interactant>
    <interactant intactId="EBI-11320284">
        <id>Q9NQX0</id>
        <label>PRDM6</label>
    </interactant>
    <organismsDiffer>false</organismsDiffer>
    <experiments>3</experiments>
</comment>
<comment type="interaction">
    <interactant intactId="EBI-745689">
        <id>Q7L5A3</id>
    </interactant>
    <interactant intactId="EBI-2860264">
        <id>Q16825</id>
        <label>PTPN21</label>
    </interactant>
    <organismsDiffer>false</organismsDiffer>
    <experiments>3</experiments>
</comment>
<comment type="interaction">
    <interactant intactId="EBI-745689">
        <id>Q7L5A3</id>
    </interactant>
    <interactant intactId="EBI-741332">
        <id>P57052</id>
        <label>RBM11</label>
    </interactant>
    <organismsDiffer>false</organismsDiffer>
    <experiments>3</experiments>
</comment>
<comment type="interaction">
    <interactant intactId="EBI-745689">
        <id>Q7L5A3</id>
    </interactant>
    <interactant intactId="EBI-747398">
        <id>Q9UHJ3</id>
        <label>SFMBT1</label>
    </interactant>
    <organismsDiffer>false</organismsDiffer>
    <experiments>3</experiments>
</comment>
<comment type="interaction">
    <interactant intactId="EBI-745689">
        <id>Q7L5A3</id>
    </interactant>
    <interactant intactId="EBI-10269374">
        <id>Q8ND83</id>
        <label>SLAIN1</label>
    </interactant>
    <organismsDiffer>false</organismsDiffer>
    <experiments>3</experiments>
</comment>
<comment type="interaction">
    <interactant intactId="EBI-745689">
        <id>Q7L5A3</id>
    </interactant>
    <interactant intactId="EBI-741237">
        <id>O60504</id>
        <label>SORBS3</label>
    </interactant>
    <organismsDiffer>false</organismsDiffer>
    <experiments>3</experiments>
</comment>
<comment type="interaction">
    <interactant intactId="EBI-745689">
        <id>Q7L5A3</id>
    </interactant>
    <interactant intactId="EBI-2853126">
        <id>Q9NUY8</id>
        <label>TBC1D23</label>
    </interactant>
    <organismsDiffer>false</organismsDiffer>
    <experiments>3</experiments>
</comment>
<comment type="interaction">
    <interactant intactId="EBI-745689">
        <id>Q7L5A3</id>
    </interactant>
    <interactant intactId="EBI-11139477">
        <id>Q96N21</id>
        <label>TEPSIN</label>
    </interactant>
    <organismsDiffer>false</organismsDiffer>
    <experiments>3</experiments>
</comment>
<comment type="interaction">
    <interactant intactId="EBI-745689">
        <id>Q7L5A3</id>
    </interactant>
    <interactant intactId="EBI-11741437">
        <id>Q08117-2</id>
        <label>TLE5</label>
    </interactant>
    <organismsDiffer>false</organismsDiffer>
    <experiments>3</experiments>
</comment>
<comment type="interaction">
    <interactant intactId="EBI-745689">
        <id>Q7L5A3</id>
    </interactant>
    <interactant intactId="EBI-355744">
        <id>Q12933</id>
        <label>TRAF2</label>
    </interactant>
    <organismsDiffer>false</organismsDiffer>
    <experiments>3</experiments>
</comment>
<comment type="interaction">
    <interactant intactId="EBI-745689">
        <id>Q7L5A3</id>
    </interactant>
    <interactant intactId="EBI-3650647">
        <id>Q9BUZ4</id>
        <label>TRAF4</label>
    </interactant>
    <organismsDiffer>false</organismsDiffer>
    <experiments>5</experiments>
</comment>
<comment type="interaction">
    <interactant intactId="EBI-745689">
        <id>Q7L5A3</id>
    </interactant>
    <interactant intactId="EBI-719493">
        <id>P14373</id>
        <label>TRIM27</label>
    </interactant>
    <organismsDiffer>false</organismsDiffer>
    <experiments>7</experiments>
</comment>
<comment type="interaction">
    <interactant intactId="EBI-745689">
        <id>Q7L5A3</id>
    </interactant>
    <interactant intactId="EBI-9031083">
        <id>Q9Y2B5</id>
        <label>VPS9D1</label>
    </interactant>
    <organismsDiffer>false</organismsDiffer>
    <experiments>3</experiments>
</comment>
<comment type="interaction">
    <interactant intactId="EBI-745689">
        <id>Q7L5A3</id>
    </interactant>
    <interactant intactId="EBI-12040603">
        <id>Q9NZC7-5</id>
        <label>WWOX</label>
    </interactant>
    <organismsDiffer>false</organismsDiffer>
    <experiments>3</experiments>
</comment>
<comment type="interaction">
    <interactant intactId="EBI-745689">
        <id>Q7L5A3</id>
    </interactant>
    <interactant intactId="EBI-743923">
        <id>O00308</id>
        <label>WWP2</label>
    </interactant>
    <organismsDiffer>false</organismsDiffer>
    <experiments>3</experiments>
</comment>
<comment type="interaction">
    <interactant intactId="EBI-745689">
        <id>Q7L5A3</id>
    </interactant>
    <interactant intactId="EBI-12030590">
        <id>Q9H0C1</id>
        <label>ZMYND12</label>
    </interactant>
    <organismsDiffer>false</organismsDiffer>
    <experiments>3</experiments>
</comment>
<comment type="interaction">
    <interactant intactId="EBI-745689">
        <id>Q7L5A3</id>
    </interactant>
    <interactant intactId="EBI-3937106">
        <id>Q9P2Y4</id>
        <label>ZNF219</label>
    </interactant>
    <organismsDiffer>false</organismsDiffer>
    <experiments>3</experiments>
</comment>
<comment type="interaction">
    <interactant intactId="EBI-745689">
        <id>Q7L5A3</id>
    </interactant>
    <interactant intactId="EBI-10172590">
        <id>Q7Z3I7</id>
        <label>ZNF572</label>
    </interactant>
    <organismsDiffer>false</organismsDiffer>
    <experiments>3</experiments>
</comment>
<comment type="interaction">
    <interactant intactId="EBI-745689">
        <id>Q7L5A3</id>
    </interactant>
    <interactant intactId="EBI-625509">
        <id>Q8N720</id>
        <label>ZNF655</label>
    </interactant>
    <organismsDiffer>false</organismsDiffer>
    <experiments>3</experiments>
</comment>
<comment type="interaction">
    <interactant intactId="EBI-745689">
        <id>Q7L5A3</id>
    </interactant>
    <interactant intactId="EBI-527853">
        <id>Q9UGI0</id>
        <label>ZRANB1</label>
    </interactant>
    <organismsDiffer>false</organismsDiffer>
    <experiments>3</experiments>
</comment>
<comment type="subcellular location">
    <subcellularLocation>
        <location evidence="1">Nucleus</location>
    </subcellularLocation>
</comment>
<comment type="alternative products">
    <event type="alternative splicing"/>
    <isoform>
        <id>Q7L5A3-1</id>
        <name>1</name>
        <sequence type="displayed"/>
    </isoform>
    <isoform>
        <id>Q7L5A3-2</id>
        <name>2</name>
        <sequence type="described" ref="VSP_030063"/>
    </isoform>
    <isoform>
        <id>Q7L5A3-3</id>
        <name>3</name>
        <sequence type="described" ref="VSP_042437"/>
    </isoform>
</comment>
<comment type="domain">
    <text evidence="2">The protein contains a transactivation domain (TAD) which may be required for transcriptional activation of a subset of target genes.</text>
</comment>
<comment type="similarity">
    <text evidence="5">Belongs to the ATOS family.</text>
</comment>
<comment type="sequence caution" evidence="5">
    <conflict type="erroneous gene model prediction">
        <sequence resource="EMBL-CDS" id="AAC07982"/>
    </conflict>
</comment>
<comment type="sequence caution" evidence="5">
    <conflict type="erroneous initiation">
        <sequence resource="EMBL-CDS" id="BAA96063"/>
    </conflict>
    <text>Extended N-terminus.</text>
</comment>
<accession>Q7L5A3</accession>
<accession>B1AML4</accession>
<accession>B1AML5</accession>
<accession>D3DRN5</accession>
<accession>O60377</accession>
<accession>Q9BQ60</accession>
<accession>Q9HAI9</accession>
<accession>Q9P1Y9</accession>